<organism>
    <name type="scientific">Saccharomyces cerevisiae (strain RM11-1a)</name>
    <name type="common">Baker's yeast</name>
    <dbReference type="NCBI Taxonomy" id="285006"/>
    <lineage>
        <taxon>Eukaryota</taxon>
        <taxon>Fungi</taxon>
        <taxon>Dikarya</taxon>
        <taxon>Ascomycota</taxon>
        <taxon>Saccharomycotina</taxon>
        <taxon>Saccharomycetes</taxon>
        <taxon>Saccharomycetales</taxon>
        <taxon>Saccharomycetaceae</taxon>
        <taxon>Saccharomyces</taxon>
    </lineage>
</organism>
<protein>
    <recommendedName>
        <fullName>Probable metalloreductase AIM14</fullName>
        <ecNumber>1.16.1.-</ecNumber>
    </recommendedName>
    <alternativeName>
        <fullName>Altered inheritance of mitochondria protein 14</fullName>
    </alternativeName>
</protein>
<accession>B3LHL3</accession>
<dbReference type="EC" id="1.16.1.-"/>
<dbReference type="EMBL" id="CH408044">
    <property type="protein sequence ID" value="EDV10371.1"/>
    <property type="molecule type" value="Genomic_DNA"/>
</dbReference>
<dbReference type="SMR" id="B3LHL3"/>
<dbReference type="HOGENOM" id="CLU_036508_0_0_1"/>
<dbReference type="OrthoDB" id="2468at4893"/>
<dbReference type="Proteomes" id="UP000008335">
    <property type="component" value="Unassembled WGS sequence"/>
</dbReference>
<dbReference type="GO" id="GO:0005886">
    <property type="term" value="C:plasma membrane"/>
    <property type="evidence" value="ECO:0007669"/>
    <property type="project" value="TreeGrafter"/>
</dbReference>
<dbReference type="GO" id="GO:0000293">
    <property type="term" value="F:ferric-chelate reductase activity"/>
    <property type="evidence" value="ECO:0007669"/>
    <property type="project" value="TreeGrafter"/>
</dbReference>
<dbReference type="GO" id="GO:0033215">
    <property type="term" value="P:reductive iron assimilation"/>
    <property type="evidence" value="ECO:0007669"/>
    <property type="project" value="TreeGrafter"/>
</dbReference>
<dbReference type="CDD" id="cd06186">
    <property type="entry name" value="NOX_Duox_like_FAD_NADP"/>
    <property type="match status" value="1"/>
</dbReference>
<dbReference type="Gene3D" id="3.40.50.80">
    <property type="entry name" value="Nucleotide-binding domain of ferredoxin-NADP reductase (FNR) module"/>
    <property type="match status" value="1"/>
</dbReference>
<dbReference type="InterPro" id="IPR013112">
    <property type="entry name" value="FAD-bd_8"/>
</dbReference>
<dbReference type="InterPro" id="IPR013130">
    <property type="entry name" value="Fe3_Rdtase_TM_dom"/>
</dbReference>
<dbReference type="InterPro" id="IPR013121">
    <property type="entry name" value="Fe_red_NAD-bd_6"/>
</dbReference>
<dbReference type="InterPro" id="IPR039261">
    <property type="entry name" value="FNR_nucleotide-bd"/>
</dbReference>
<dbReference type="InterPro" id="IPR050369">
    <property type="entry name" value="RBOH/FRE"/>
</dbReference>
<dbReference type="PANTHER" id="PTHR11972:SF198">
    <property type="entry name" value="METALLOREDUCTASE AIM14-RELATED"/>
    <property type="match status" value="1"/>
</dbReference>
<dbReference type="PANTHER" id="PTHR11972">
    <property type="entry name" value="NADPH OXIDASE"/>
    <property type="match status" value="1"/>
</dbReference>
<dbReference type="Pfam" id="PF08022">
    <property type="entry name" value="FAD_binding_8"/>
    <property type="match status" value="1"/>
</dbReference>
<dbReference type="Pfam" id="PF01794">
    <property type="entry name" value="Ferric_reduct"/>
    <property type="match status" value="1"/>
</dbReference>
<dbReference type="Pfam" id="PF08030">
    <property type="entry name" value="NAD_binding_6"/>
    <property type="match status" value="1"/>
</dbReference>
<dbReference type="SFLD" id="SFLDF00463">
    <property type="entry name" value="AIM14"/>
    <property type="match status" value="1"/>
</dbReference>
<dbReference type="SFLD" id="SFLDS00052">
    <property type="entry name" value="Ferric_Reductase_Domain"/>
    <property type="match status" value="1"/>
</dbReference>
<dbReference type="SFLD" id="SFLDG01168">
    <property type="entry name" value="Ferric_reductase_subgroup_(FRE"/>
    <property type="match status" value="1"/>
</dbReference>
<proteinExistence type="inferred from homology"/>
<name>AIM14_YEAS1</name>
<feature type="chain" id="PRO_0000408751" description="Probable metalloreductase AIM14">
    <location>
        <begin position="1"/>
        <end position="570"/>
    </location>
</feature>
<feature type="transmembrane region" description="Helical" evidence="2">
    <location>
        <begin position="21"/>
        <end position="41"/>
    </location>
</feature>
<feature type="transmembrane region" description="Helical" evidence="2">
    <location>
        <begin position="70"/>
        <end position="90"/>
    </location>
</feature>
<feature type="transmembrane region" description="Helical" evidence="2">
    <location>
        <begin position="101"/>
        <end position="118"/>
    </location>
</feature>
<feature type="transmembrane region" description="Helical" evidence="2">
    <location>
        <begin position="142"/>
        <end position="162"/>
    </location>
</feature>
<feature type="transmembrane region" description="Helical" evidence="2">
    <location>
        <begin position="177"/>
        <end position="197"/>
    </location>
</feature>
<feature type="transmembrane region" description="Helical" evidence="2">
    <location>
        <begin position="204"/>
        <end position="224"/>
    </location>
</feature>
<feature type="transmembrane region" description="Helical" evidence="2">
    <location>
        <begin position="230"/>
        <end position="250"/>
    </location>
</feature>
<feature type="domain" description="Ferric oxidoreductase">
    <location>
        <begin position="101"/>
        <end position="219"/>
    </location>
</feature>
<feature type="domain" description="FAD-binding FR-type">
    <location>
        <begin position="250"/>
        <end position="388"/>
    </location>
</feature>
<feature type="region of interest" description="Disordered" evidence="3">
    <location>
        <begin position="481"/>
        <end position="507"/>
    </location>
</feature>
<feature type="compositionally biased region" description="Polar residues" evidence="3">
    <location>
        <begin position="481"/>
        <end position="505"/>
    </location>
</feature>
<sequence>MKESPLITLVKRHSETHFANIKYGYYVLIISLVYLIGLALLRAFGRRTPSRSSSAFKNKIIYRLYDIDPAIHLGILFFAVLIPFYYHYSLTTQSTVYLKRLGRLSYALIPLNLFLTLRPNWFLRKNCTYTDFIPFHKWFSRIITVIGLLHGIFFIIKWAIDDNVSLKQKLILKTFNFVGFIISILVLFLLICSIGPMRRYNYRLFYIVHNLVNVAFILLTPIHSRPGVKFPFLLLNCTLLFIHIINRIVFAKSLMILNKNANYSKTNLVHVRLPRAILPDYFEPGSHIRISPYRRINPLYWLLPSHPYTIASLAEDNSIDLIIKETSTAEPGSQIESLRSNPKSFHLDQEKTYTLINSYPPSVPEECYSQGTNIAIICGGSGISFALPLFRHFFNKENVKYLKMIWLIKNYSEYELVLDYLKTNGLTFEKKLSNNKRISVFISGEYTAETRLDEITTNIDDENSEYEMGSFNNEDEDLSISNFNSENADSNDNTPETSHSPTKENGSLIEVKSKHSFTLSSELKSFNNESAQVNQNETWLFSCGPPSLLQLSKKYCNDERINFVCETYGL</sequence>
<reference key="1">
    <citation type="submission" date="2005-03" db="EMBL/GenBank/DDBJ databases">
        <title>Annotation of the Saccharomyces cerevisiae RM11-1a genome.</title>
        <authorList>
            <consortium name="The Broad Institute Genome Sequencing Platform"/>
            <person name="Birren B.W."/>
            <person name="Lander E.S."/>
            <person name="Galagan J.E."/>
            <person name="Nusbaum C."/>
            <person name="Devon K."/>
            <person name="Cuomo C."/>
            <person name="Jaffe D.B."/>
            <person name="Butler J."/>
            <person name="Alvarez P."/>
            <person name="Gnerre S."/>
            <person name="Grabherr M."/>
            <person name="Kleber M."/>
            <person name="Mauceli E.W."/>
            <person name="Brockman W."/>
            <person name="MacCallum I.A."/>
            <person name="Rounsley S."/>
            <person name="Young S.K."/>
            <person name="LaButti K."/>
            <person name="Pushparaj V."/>
            <person name="DeCaprio D."/>
            <person name="Crawford M."/>
            <person name="Koehrsen M."/>
            <person name="Engels R."/>
            <person name="Montgomery P."/>
            <person name="Pearson M."/>
            <person name="Howarth C."/>
            <person name="Larson L."/>
            <person name="Luoma S."/>
            <person name="White J."/>
            <person name="O'Leary S."/>
            <person name="Kodira C.D."/>
            <person name="Zeng Q."/>
            <person name="Yandava C."/>
            <person name="Alvarado L."/>
            <person name="Pratt S."/>
            <person name="Kruglyak L."/>
        </authorList>
    </citation>
    <scope>NUCLEOTIDE SEQUENCE [LARGE SCALE GENOMIC DNA]</scope>
    <source>
        <strain>RM11-1a</strain>
    </source>
</reference>
<evidence type="ECO:0000250" key="1"/>
<evidence type="ECO:0000255" key="2"/>
<evidence type="ECO:0000256" key="3">
    <source>
        <dbReference type="SAM" id="MobiDB-lite"/>
    </source>
</evidence>
<evidence type="ECO:0000305" key="4"/>
<comment type="function">
    <text evidence="1">Probable cell surface metalloreductase. May be involved in iron or copper homeostasis (By similarity).</text>
</comment>
<comment type="subunit">
    <text evidence="1">Interacts with ribosomes.</text>
</comment>
<comment type="subcellular location">
    <subcellularLocation>
        <location evidence="1">Membrane</location>
        <topology>Multi-pass membrane protein</topology>
    </subcellularLocation>
</comment>
<comment type="similarity">
    <text evidence="4">Belongs to the ferric reductase (FRE) family. AIM14 subfamily.</text>
</comment>
<gene>
    <name type="primary">AIM14</name>
    <name type="ORF">SCRG_01152</name>
</gene>
<keyword id="KW-0249">Electron transport</keyword>
<keyword id="KW-0274">FAD</keyword>
<keyword id="KW-0285">Flavoprotein</keyword>
<keyword id="KW-0406">Ion transport</keyword>
<keyword id="KW-0472">Membrane</keyword>
<keyword id="KW-0521">NADP</keyword>
<keyword id="KW-0560">Oxidoreductase</keyword>
<keyword id="KW-0812">Transmembrane</keyword>
<keyword id="KW-1133">Transmembrane helix</keyword>
<keyword id="KW-0813">Transport</keyword>